<organism>
    <name type="scientific">Xanthomonas oryzae pv. oryzae (strain MAFF 311018)</name>
    <dbReference type="NCBI Taxonomy" id="342109"/>
    <lineage>
        <taxon>Bacteria</taxon>
        <taxon>Pseudomonadati</taxon>
        <taxon>Pseudomonadota</taxon>
        <taxon>Gammaproteobacteria</taxon>
        <taxon>Lysobacterales</taxon>
        <taxon>Lysobacteraceae</taxon>
        <taxon>Xanthomonas</taxon>
    </lineage>
</organism>
<sequence length="319" mass="35396">MNPNYLDFEQPIADLEAKIQELRKASTGPAVNVETEVRALRDKLRVRTAQIFRDLSAWQVSQLARHPQRPYTLDYINTICDEFQELAGDRAYADDKAIVGGLGRIDGRPVVIIGHQKGRDTKTKVARNFGMPRPEGYRKALRLMKLAERFRLPLLTFIDTPGAYPGIGAEERGQSEAIARNLLEMAELKIPVICTVIGEGGSGGALAIGVGDRTLMLEYGTYSVISPEGCASILWKDAGKAKDAAEQLGLTARRLKDLSLVDKVIREPTGGAHRNPQQMGKRLKAVLLNELDALEKVPLETLLQQRYERLRSYGAYEGR</sequence>
<proteinExistence type="inferred from homology"/>
<reference key="1">
    <citation type="journal article" date="2005" name="Jpn. Agric. Res. Q.">
        <title>Genome sequence of Xanthomonas oryzae pv. oryzae suggests contribution of large numbers of effector genes and insertion sequences to its race diversity.</title>
        <authorList>
            <person name="Ochiai H."/>
            <person name="Inoue Y."/>
            <person name="Takeya M."/>
            <person name="Sasaki A."/>
            <person name="Kaku H."/>
        </authorList>
    </citation>
    <scope>NUCLEOTIDE SEQUENCE [LARGE SCALE GENOMIC DNA]</scope>
    <source>
        <strain>MAFF 311018</strain>
    </source>
</reference>
<feature type="chain" id="PRO_1000062698" description="Acetyl-coenzyme A carboxylase carboxyl transferase subunit alpha">
    <location>
        <begin position="1"/>
        <end position="319"/>
    </location>
</feature>
<feature type="domain" description="CoA carboxyltransferase C-terminal" evidence="2">
    <location>
        <begin position="32"/>
        <end position="293"/>
    </location>
</feature>
<protein>
    <recommendedName>
        <fullName evidence="1">Acetyl-coenzyme A carboxylase carboxyl transferase subunit alpha</fullName>
        <shortName evidence="1">ACCase subunit alpha</shortName>
        <shortName evidence="1">Acetyl-CoA carboxylase carboxyltransferase subunit alpha</shortName>
        <ecNumber evidence="1">2.1.3.15</ecNumber>
    </recommendedName>
</protein>
<gene>
    <name evidence="1" type="primary">accA</name>
    <name type="ordered locus">XOO1851</name>
</gene>
<dbReference type="EC" id="2.1.3.15" evidence="1"/>
<dbReference type="EMBL" id="AP008229">
    <property type="protein sequence ID" value="BAE68606.1"/>
    <property type="molecule type" value="Genomic_DNA"/>
</dbReference>
<dbReference type="RefSeq" id="WP_011258685.1">
    <property type="nucleotide sequence ID" value="NC_007705.1"/>
</dbReference>
<dbReference type="SMR" id="Q2P4C1"/>
<dbReference type="KEGG" id="xom:XOO1851"/>
<dbReference type="HOGENOM" id="CLU_015486_0_2_6"/>
<dbReference type="UniPathway" id="UPA00655">
    <property type="reaction ID" value="UER00711"/>
</dbReference>
<dbReference type="GO" id="GO:0009317">
    <property type="term" value="C:acetyl-CoA carboxylase complex"/>
    <property type="evidence" value="ECO:0007669"/>
    <property type="project" value="InterPro"/>
</dbReference>
<dbReference type="GO" id="GO:0003989">
    <property type="term" value="F:acetyl-CoA carboxylase activity"/>
    <property type="evidence" value="ECO:0007669"/>
    <property type="project" value="InterPro"/>
</dbReference>
<dbReference type="GO" id="GO:0005524">
    <property type="term" value="F:ATP binding"/>
    <property type="evidence" value="ECO:0007669"/>
    <property type="project" value="UniProtKB-KW"/>
</dbReference>
<dbReference type="GO" id="GO:0016743">
    <property type="term" value="F:carboxyl- or carbamoyltransferase activity"/>
    <property type="evidence" value="ECO:0007669"/>
    <property type="project" value="UniProtKB-UniRule"/>
</dbReference>
<dbReference type="GO" id="GO:0006633">
    <property type="term" value="P:fatty acid biosynthetic process"/>
    <property type="evidence" value="ECO:0007669"/>
    <property type="project" value="UniProtKB-KW"/>
</dbReference>
<dbReference type="GO" id="GO:2001295">
    <property type="term" value="P:malonyl-CoA biosynthetic process"/>
    <property type="evidence" value="ECO:0007669"/>
    <property type="project" value="UniProtKB-UniRule"/>
</dbReference>
<dbReference type="FunFam" id="3.90.226.10:FF:000008">
    <property type="entry name" value="Acetyl-coenzyme A carboxylase carboxyl transferase subunit alpha"/>
    <property type="match status" value="1"/>
</dbReference>
<dbReference type="Gene3D" id="3.90.226.10">
    <property type="entry name" value="2-enoyl-CoA Hydratase, Chain A, domain 1"/>
    <property type="match status" value="1"/>
</dbReference>
<dbReference type="HAMAP" id="MF_00823">
    <property type="entry name" value="AcetylCoA_CT_alpha"/>
    <property type="match status" value="1"/>
</dbReference>
<dbReference type="InterPro" id="IPR001095">
    <property type="entry name" value="Acetyl_CoA_COase_a_su"/>
</dbReference>
<dbReference type="InterPro" id="IPR029045">
    <property type="entry name" value="ClpP/crotonase-like_dom_sf"/>
</dbReference>
<dbReference type="InterPro" id="IPR011763">
    <property type="entry name" value="COA_CT_C"/>
</dbReference>
<dbReference type="NCBIfam" id="TIGR00513">
    <property type="entry name" value="accA"/>
    <property type="match status" value="1"/>
</dbReference>
<dbReference type="NCBIfam" id="NF041504">
    <property type="entry name" value="AccA_sub"/>
    <property type="match status" value="1"/>
</dbReference>
<dbReference type="NCBIfam" id="NF004344">
    <property type="entry name" value="PRK05724.1"/>
    <property type="match status" value="1"/>
</dbReference>
<dbReference type="PANTHER" id="PTHR42853">
    <property type="entry name" value="ACETYL-COENZYME A CARBOXYLASE CARBOXYL TRANSFERASE SUBUNIT ALPHA"/>
    <property type="match status" value="1"/>
</dbReference>
<dbReference type="PANTHER" id="PTHR42853:SF3">
    <property type="entry name" value="ACETYL-COENZYME A CARBOXYLASE CARBOXYL TRANSFERASE SUBUNIT ALPHA, CHLOROPLASTIC"/>
    <property type="match status" value="1"/>
</dbReference>
<dbReference type="Pfam" id="PF03255">
    <property type="entry name" value="ACCA"/>
    <property type="match status" value="1"/>
</dbReference>
<dbReference type="PRINTS" id="PR01069">
    <property type="entry name" value="ACCCTRFRASEA"/>
</dbReference>
<dbReference type="SUPFAM" id="SSF52096">
    <property type="entry name" value="ClpP/crotonase"/>
    <property type="match status" value="1"/>
</dbReference>
<dbReference type="PROSITE" id="PS50989">
    <property type="entry name" value="COA_CT_CTER"/>
    <property type="match status" value="1"/>
</dbReference>
<accession>Q2P4C1</accession>
<keyword id="KW-0067">ATP-binding</keyword>
<keyword id="KW-0963">Cytoplasm</keyword>
<keyword id="KW-0275">Fatty acid biosynthesis</keyword>
<keyword id="KW-0276">Fatty acid metabolism</keyword>
<keyword id="KW-0444">Lipid biosynthesis</keyword>
<keyword id="KW-0443">Lipid metabolism</keyword>
<keyword id="KW-0547">Nucleotide-binding</keyword>
<keyword id="KW-0808">Transferase</keyword>
<evidence type="ECO:0000255" key="1">
    <source>
        <dbReference type="HAMAP-Rule" id="MF_00823"/>
    </source>
</evidence>
<evidence type="ECO:0000255" key="2">
    <source>
        <dbReference type="PROSITE-ProRule" id="PRU01137"/>
    </source>
</evidence>
<name>ACCA_XANOM</name>
<comment type="function">
    <text evidence="1">Component of the acetyl coenzyme A carboxylase (ACC) complex. First, biotin carboxylase catalyzes the carboxylation of biotin on its carrier protein (BCCP) and then the CO(2) group is transferred by the carboxyltransferase to acetyl-CoA to form malonyl-CoA.</text>
</comment>
<comment type="catalytic activity">
    <reaction evidence="1">
        <text>N(6)-carboxybiotinyl-L-lysyl-[protein] + acetyl-CoA = N(6)-biotinyl-L-lysyl-[protein] + malonyl-CoA</text>
        <dbReference type="Rhea" id="RHEA:54728"/>
        <dbReference type="Rhea" id="RHEA-COMP:10505"/>
        <dbReference type="Rhea" id="RHEA-COMP:10506"/>
        <dbReference type="ChEBI" id="CHEBI:57288"/>
        <dbReference type="ChEBI" id="CHEBI:57384"/>
        <dbReference type="ChEBI" id="CHEBI:83144"/>
        <dbReference type="ChEBI" id="CHEBI:83145"/>
        <dbReference type="EC" id="2.1.3.15"/>
    </reaction>
</comment>
<comment type="pathway">
    <text evidence="1">Lipid metabolism; malonyl-CoA biosynthesis; malonyl-CoA from acetyl-CoA: step 1/1.</text>
</comment>
<comment type="subunit">
    <text evidence="1">Acetyl-CoA carboxylase is a heterohexamer composed of biotin carboxyl carrier protein (AccB), biotin carboxylase (AccC) and two subunits each of ACCase subunit alpha (AccA) and ACCase subunit beta (AccD).</text>
</comment>
<comment type="subcellular location">
    <subcellularLocation>
        <location evidence="1">Cytoplasm</location>
    </subcellularLocation>
</comment>
<comment type="similarity">
    <text evidence="1">Belongs to the AccA family.</text>
</comment>